<organism>
    <name type="scientific">Influenza C virus (strain C/Pig/Beijing/439/1982)</name>
    <dbReference type="NCBI Taxonomy" id="11566"/>
    <lineage>
        <taxon>Viruses</taxon>
        <taxon>Riboviria</taxon>
        <taxon>Orthornavirae</taxon>
        <taxon>Negarnaviricota</taxon>
        <taxon>Polyploviricotina</taxon>
        <taxon>Insthoviricetes</taxon>
        <taxon>Articulavirales</taxon>
        <taxon>Orthomyxoviridae</taxon>
        <taxon>Gammainfluenzavirus</taxon>
        <taxon>Gammainfluenzavirus influenzae</taxon>
        <taxon>Influenza C virus</taxon>
    </lineage>
</organism>
<sequence length="642" mass="70739">AEKIKICLQKQVNSSFSLHNGFGGNLYATEEKRMFELVKPKAGASVLNQSTWICFGDSRTDQSNSAFPRSADVSAKTAEKFRSLSGGSLMLSMFGPPGKVDYLYQGCGKHKVFYEGVNWSPHTAIDCYRKNWTDIKLNFQKSIYELASQSHCMSLVNALDKTIPLQATKGVAKNCNNSFLKNPALYTQEVKPLDQICGEENLAFFTLPTQFGTYECKLHLVASCYFIYDSKEVYNKRGCGNYFQVIYDSSGKVVGGLDNRVSPYTGNSGDTPTMQCDMLQLKPGRYSVRSSPRFLLMPERSYCFDMKEKGLVTAVQSIWGKGRKSDYAVDQACLSTPGCMLIQKQKPYIGEADDHHGDQEMRELLSGLDYEARCISQSGWVNETSPFTEEYLLPPKFGRCPLAAKEESIPKIPDGLLIPTSGTDTTVTKPKSRIFGIDDLIIGLFFVAIVEAGIGGYLLGSRKESGGGVTKESAEKGFEKIGNDIQILRSSTNIAIEKLNDRISHDEQAIRDLTLEIENARSEALLGELGIIRALLVGNISIGLQESLWELASEITNRAGDLAVEVSPGCWIIDNNICDQSCQNFIFKFNETAPVPTIPPLDTKIDLQSDPFYWGSSLGLAITTPISLAALVISGIAICRTK</sequence>
<reference key="1">
    <citation type="journal article" date="1985" name="Virology">
        <title>Noncumulative sequence changes in the hemagglutinin genes of influenza C virus isolates.</title>
        <authorList>
            <person name="Buonagurio D.A."/>
            <person name="Nakada S."/>
            <person name="Desselberger U."/>
            <person name="Krystal M."/>
            <person name="Palese P."/>
        </authorList>
    </citation>
    <scope>NUCLEOTIDE SEQUENCE [GENOMIC RNA]</scope>
</reference>
<protein>
    <recommendedName>
        <fullName>Hemagglutinin-esterase-fusion glycoprotein</fullName>
        <shortName>HEF</shortName>
        <ecNumber>3.1.1.53</ecNumber>
    </recommendedName>
    <component>
        <recommendedName>
            <fullName>Hemagglutinin-esterase-fusion glycoprotein chain 1</fullName>
            <shortName>HEF1</shortName>
        </recommendedName>
    </component>
    <component>
        <recommendedName>
            <fullName>Hemagglutinin-esterase-fusion glycoprotein chain 2</fullName>
            <shortName>HEF2</shortName>
        </recommendedName>
    </component>
</protein>
<feature type="signal peptide">
    <location>
        <begin position="1" status="less than"/>
        <end position="1"/>
    </location>
</feature>
<feature type="chain" id="PRO_0000039166" description="Hemagglutinin-esterase-fusion glycoprotein chain 1">
    <location>
        <begin position="2"/>
        <end position="433"/>
    </location>
</feature>
<feature type="chain" id="PRO_0000039167" description="Hemagglutinin-esterase-fusion glycoprotein chain 2">
    <location>
        <begin position="434"/>
        <end position="642"/>
    </location>
</feature>
<feature type="topological domain" description="Extracellular" evidence="2">
    <location>
        <begin position="2"/>
        <end position="617"/>
    </location>
</feature>
<feature type="transmembrane region" description="Helical" evidence="2">
    <location>
        <begin position="618"/>
        <end position="638"/>
    </location>
</feature>
<feature type="topological domain" description="Cytoplasmic" evidence="2">
    <location>
        <begin position="639"/>
        <end position="642"/>
    </location>
</feature>
<feature type="region of interest" description="Fusion domain-1" evidence="1">
    <location>
        <begin position="2"/>
        <end position="27"/>
    </location>
</feature>
<feature type="region of interest" description="Esterase domain-1" evidence="1">
    <location>
        <begin position="28"/>
        <end position="138"/>
    </location>
</feature>
<feature type="region of interest" description="N-acetyl-9-O-acetylneuraminic acid binding" evidence="1">
    <location>
        <begin position="138"/>
        <end position="297"/>
    </location>
</feature>
<feature type="region of interest" description="Esterase domain-2" evidence="1">
    <location>
        <begin position="298"/>
        <end position="352"/>
    </location>
</feature>
<feature type="region of interest" description="Fusion domain-2" evidence="1">
    <location>
        <begin position="353"/>
        <end position="638"/>
    </location>
</feature>
<feature type="active site" description="Nucleophile" evidence="1">
    <location>
        <position position="58"/>
    </location>
</feature>
<feature type="active site" description="Charge relay system" evidence="1">
    <location>
        <position position="353"/>
    </location>
</feature>
<feature type="active site" description="Charge relay system" evidence="1">
    <location>
        <position position="356"/>
    </location>
</feature>
<feature type="glycosylation site" description="N-linked (GlcNAc...) asparagine; by host" evidence="2">
    <location>
        <position position="13"/>
    </location>
</feature>
<feature type="glycosylation site" description="N-linked (GlcNAc...) asparagine; by host" evidence="2">
    <location>
        <position position="48"/>
    </location>
</feature>
<feature type="glycosylation site" description="N-linked (GlcNAc...) asparagine; by host" evidence="2">
    <location>
        <position position="131"/>
    </location>
</feature>
<feature type="glycosylation site" description="N-linked (GlcNAc...) asparagine; by host" evidence="2">
    <location>
        <position position="382"/>
    </location>
</feature>
<feature type="disulfide bond" description="Interchain (between HEF1 and HEF2 chains)" evidence="1">
    <location>
        <begin position="7"/>
        <end position="570"/>
    </location>
</feature>
<feature type="disulfide bond" evidence="1">
    <location>
        <begin position="107"/>
        <end position="152"/>
    </location>
</feature>
<feature type="disulfide bond" evidence="1">
    <location>
        <begin position="127"/>
        <end position="175"/>
    </location>
</feature>
<feature type="disulfide bond" evidence="1">
    <location>
        <begin position="197"/>
        <end position="239"/>
    </location>
</feature>
<feature type="disulfide bond" evidence="1">
    <location>
        <begin position="216"/>
        <end position="303"/>
    </location>
</feature>
<feature type="disulfide bond" evidence="1">
    <location>
        <begin position="224"/>
        <end position="276"/>
    </location>
</feature>
<feature type="disulfide bond" evidence="1">
    <location>
        <begin position="333"/>
        <end position="339"/>
    </location>
</feature>
<feature type="non-terminal residue">
    <location>
        <position position="1"/>
    </location>
</feature>
<evidence type="ECO:0000250" key="1"/>
<evidence type="ECO:0000255" key="2"/>
<evidence type="ECO:0000305" key="3"/>
<gene>
    <name type="primary">HE</name>
</gene>
<proteinExistence type="inferred from homology"/>
<name>HEMA_INCP3</name>
<dbReference type="EC" id="3.1.1.53"/>
<dbReference type="EMBL" id="M11645">
    <property type="protein sequence ID" value="AAA43794.1"/>
    <property type="molecule type" value="Genomic_RNA"/>
</dbReference>
<dbReference type="SMR" id="P07966"/>
<dbReference type="GlyCosmos" id="P07966">
    <property type="glycosylation" value="4 sites, No reported glycans"/>
</dbReference>
<dbReference type="GO" id="GO:0020002">
    <property type="term" value="C:host cell plasma membrane"/>
    <property type="evidence" value="ECO:0007669"/>
    <property type="project" value="UniProtKB-SubCell"/>
</dbReference>
<dbReference type="GO" id="GO:0016020">
    <property type="term" value="C:membrane"/>
    <property type="evidence" value="ECO:0007669"/>
    <property type="project" value="UniProtKB-KW"/>
</dbReference>
<dbReference type="GO" id="GO:0019031">
    <property type="term" value="C:viral envelope"/>
    <property type="evidence" value="ECO:0007669"/>
    <property type="project" value="UniProtKB-KW"/>
</dbReference>
<dbReference type="GO" id="GO:0055036">
    <property type="term" value="C:virion membrane"/>
    <property type="evidence" value="ECO:0007669"/>
    <property type="project" value="UniProtKB-SubCell"/>
</dbReference>
<dbReference type="GO" id="GO:0046789">
    <property type="term" value="F:host cell surface receptor binding"/>
    <property type="evidence" value="ECO:0007669"/>
    <property type="project" value="InterPro"/>
</dbReference>
<dbReference type="GO" id="GO:0106331">
    <property type="term" value="F:sialate 4-O-acetylesterase activity"/>
    <property type="evidence" value="ECO:0007669"/>
    <property type="project" value="RHEA"/>
</dbReference>
<dbReference type="GO" id="GO:0106330">
    <property type="term" value="F:sialate 9-O-acetylesterase activity"/>
    <property type="evidence" value="ECO:0007669"/>
    <property type="project" value="RHEA"/>
</dbReference>
<dbReference type="GO" id="GO:0039654">
    <property type="term" value="P:fusion of virus membrane with host endosome membrane"/>
    <property type="evidence" value="ECO:0007669"/>
    <property type="project" value="UniProtKB-KW"/>
</dbReference>
<dbReference type="GO" id="GO:0019064">
    <property type="term" value="P:fusion of virus membrane with host plasma membrane"/>
    <property type="evidence" value="ECO:0007669"/>
    <property type="project" value="InterPro"/>
</dbReference>
<dbReference type="GO" id="GO:0046718">
    <property type="term" value="P:symbiont entry into host cell"/>
    <property type="evidence" value="ECO:0007669"/>
    <property type="project" value="UniProtKB-KW"/>
</dbReference>
<dbReference type="GO" id="GO:0019062">
    <property type="term" value="P:virion attachment to host cell"/>
    <property type="evidence" value="ECO:0007669"/>
    <property type="project" value="UniProtKB-KW"/>
</dbReference>
<dbReference type="Gene3D" id="2.20.70.20">
    <property type="match status" value="2"/>
</dbReference>
<dbReference type="Gene3D" id="3.90.20.10">
    <property type="match status" value="1"/>
</dbReference>
<dbReference type="InterPro" id="IPR008980">
    <property type="entry name" value="Capsid_hemagglutn"/>
</dbReference>
<dbReference type="InterPro" id="IPR007142">
    <property type="entry name" value="Hemagglutn-estrase_core"/>
</dbReference>
<dbReference type="InterPro" id="IPR003860">
    <property type="entry name" value="Hemagglutn-estrase_hemagglutn"/>
</dbReference>
<dbReference type="InterPro" id="IPR014831">
    <property type="entry name" value="Hemagglutn_stalk_influenz-C"/>
</dbReference>
<dbReference type="Pfam" id="PF03996">
    <property type="entry name" value="Hema_esterase"/>
    <property type="match status" value="1"/>
</dbReference>
<dbReference type="Pfam" id="PF02710">
    <property type="entry name" value="Hema_HEFG"/>
    <property type="match status" value="1"/>
</dbReference>
<dbReference type="Pfam" id="PF08720">
    <property type="entry name" value="Hema_stalk"/>
    <property type="match status" value="1"/>
</dbReference>
<dbReference type="SUPFAM" id="SSF58064">
    <property type="entry name" value="Influenza hemagglutinin (stalk)"/>
    <property type="match status" value="1"/>
</dbReference>
<dbReference type="SUPFAM" id="SSF52266">
    <property type="entry name" value="SGNH hydrolase"/>
    <property type="match status" value="1"/>
</dbReference>
<dbReference type="SUPFAM" id="SSF49818">
    <property type="entry name" value="Viral protein domain"/>
    <property type="match status" value="1"/>
</dbReference>
<keyword id="KW-1015">Disulfide bond</keyword>
<keyword id="KW-1170">Fusion of virus membrane with host endosomal membrane</keyword>
<keyword id="KW-1168">Fusion of virus membrane with host membrane</keyword>
<keyword id="KW-0325">Glycoprotein</keyword>
<keyword id="KW-0348">Hemagglutinin</keyword>
<keyword id="KW-1032">Host cell membrane</keyword>
<keyword id="KW-1043">Host membrane</keyword>
<keyword id="KW-0945">Host-virus interaction</keyword>
<keyword id="KW-0378">Hydrolase</keyword>
<keyword id="KW-0472">Membrane</keyword>
<keyword id="KW-0732">Signal</keyword>
<keyword id="KW-0812">Transmembrane</keyword>
<keyword id="KW-1133">Transmembrane helix</keyword>
<keyword id="KW-1161">Viral attachment to host cell</keyword>
<keyword id="KW-0261">Viral envelope protein</keyword>
<keyword id="KW-1162">Viral penetration into host cytoplasm</keyword>
<keyword id="KW-0946">Virion</keyword>
<keyword id="KW-1160">Virus entry into host cell</keyword>
<accession>P07966</accession>
<comment type="function">
    <text evidence="1">Binds to the N-acetyl-9-O-acetylneuraminic acid residues on the cell surface, bringing about the attachment of the virus particle to the cell. Plays a major role in the determination of host range restriction and virulence. Class I viral fusion protein. Responsible for penetration of the virus into the cell cytoplasm by mediating the fusion of the membrane of the endocytosed virus particle with the endosomal membrane. Low pH in endosomes induce an irreversible conformational change in HEF2, releasing the fusion hydrophobic peptide. Several trimers are required to form a competent fusion pore. Displays a receptor-destroying activity which is a neuraminidate-O-acetyl esterase. This activity cleaves off any receptor on the cell surface, which would otherwise prevent virions release. These cleavages prevent self-aggregation and ensure the efficient spread of the progeny virus from cell to cell (By similarity).</text>
</comment>
<comment type="catalytic activity">
    <reaction>
        <text>N-acetyl-9-O-acetylneuraminate + H2O = N-acetylneuraminate + acetate + H(+)</text>
        <dbReference type="Rhea" id="RHEA:22600"/>
        <dbReference type="ChEBI" id="CHEBI:15377"/>
        <dbReference type="ChEBI" id="CHEBI:15378"/>
        <dbReference type="ChEBI" id="CHEBI:28999"/>
        <dbReference type="ChEBI" id="CHEBI:30089"/>
        <dbReference type="ChEBI" id="CHEBI:35418"/>
        <dbReference type="EC" id="3.1.1.53"/>
    </reaction>
</comment>
<comment type="catalytic activity">
    <reaction>
        <text>N-acetyl-4-O-acetylneuraminate + H2O = N-acetylneuraminate + acetate + H(+)</text>
        <dbReference type="Rhea" id="RHEA:25564"/>
        <dbReference type="ChEBI" id="CHEBI:15377"/>
        <dbReference type="ChEBI" id="CHEBI:15378"/>
        <dbReference type="ChEBI" id="CHEBI:29006"/>
        <dbReference type="ChEBI" id="CHEBI:30089"/>
        <dbReference type="ChEBI" id="CHEBI:35418"/>
        <dbReference type="EC" id="3.1.1.53"/>
    </reaction>
</comment>
<comment type="subunit">
    <text evidence="1">Homotrimer of disulfide-linked HEF1-HEF2.</text>
</comment>
<comment type="subcellular location">
    <subcellularLocation>
        <location evidence="3">Virion membrane</location>
        <topology evidence="3">Single-pass type I membrane protein</topology>
    </subcellularLocation>
    <subcellularLocation>
        <location evidence="1">Host cell membrane</location>
        <topology evidence="1">Single-pass type I membrane protein</topology>
    </subcellularLocation>
</comment>
<comment type="PTM">
    <text evidence="1">In natural infection, inactive HEF is matured into HEF1 and HEF2 outside the cell by one or more trypsin-like, arginine-specific endoprotease.</text>
</comment>
<comment type="similarity">
    <text evidence="3">Belongs to the influenza type C/coronaviruses hemagglutinin-esterase family.</text>
</comment>
<organismHost>
    <name type="scientific">Homo sapiens</name>
    <name type="common">Human</name>
    <dbReference type="NCBI Taxonomy" id="9606"/>
</organismHost>
<organismHost>
    <name type="scientific">Sus scrofa</name>
    <name type="common">Pig</name>
    <dbReference type="NCBI Taxonomy" id="9823"/>
</organismHost>